<sequence>MDGAAGPGEGPAHETLQTLSQRLRVQEEEMELVKAALAEALRLLRLHGSTTTLQGSGISAPTRNSSITVPPGLPPTCSPSLVTRGTQTEEELEIVPSSGPPGLSNGPPALQGGSEEPSGTQSEGGCSSSSGAGSPGPPGILRPVQPLQRSDTPRRNSSSSSSPSERPRQKLSRKAASSANLLLRSGSTESRGNKDPLSSPGGPGSRRSNYNLEGISVKMFLRGRPITMYIPSGIRSLEELPSGPPPETLSLDWVYGYRGRDSRSNLFVLRSGEVVYFIACVVVLYRPGGGPGGPGGGGQRHYRGHTDCVRCLAVHPDGVRVASGQTAGVDKDGKPLQPVVHIWDSETLLKLQEIGLGAFERGVGALAFSAADQGAFLCVVDDSNEHMLSVWDCSRGVKLAEIKSTNDSVLAVGFSPRDSSCIVTSGKSHVHFWNWSGGTGAPGNGLLARKQGVFGKYKKPKFIPCFVFLPDGDILTGDSEGNILTWGRSVSDSKTPGRGGAKETYTIVAQAHAHEGSIFALCLRRDGTVLSGGGRDRRLVQWGPGLVALQEAEIPEHFGAVRAIAEGLGSELLVGTTKNALLRGDLAQGFSPVIQGHTDELWGLCTHPSQNRFLTCGHDRQLCLWDGEGHALAWSMDLKETGLCADFHPSGAVVVVGLNTGRWLVLDTETREIVSDVTDGNEQLSVVRYSPDGLYLAIGSHDNMIYIYSVSSCGTKSSRFGRCMGHSSFITHLDWSKDGNFIMSNSGDYEILYWDVAGGCKLLRNRYESRDREWATYTCVLGFHVYGVWPDGSDGTDINSLCRSHNERVVAVADDFCKVHLFQYPCARAKAPSRMYSGHGSHVTSVRFTHDDSYLVSLGGKDASIFQWRVLGAGSSGPAPATPSRTPSLSPASSLDV</sequence>
<reference key="1">
    <citation type="journal article" date="2004" name="Genome Res.">
        <title>The status, quality, and expansion of the NIH full-length cDNA project: the Mammalian Gene Collection (MGC).</title>
        <authorList>
            <consortium name="The MGC Project Team"/>
        </authorList>
    </citation>
    <scope>NUCLEOTIDE SEQUENCE [LARGE SCALE MRNA]</scope>
    <source>
        <strain>FVB/N</strain>
        <tissue>Liver</tissue>
        <tissue>Mammary tumor</tissue>
    </source>
</reference>
<reference key="2">
    <citation type="journal article" date="2007" name="Proc. Natl. Acad. Sci. U.S.A.">
        <title>Large-scale phosphorylation analysis of mouse liver.</title>
        <authorList>
            <person name="Villen J."/>
            <person name="Beausoleil S.A."/>
            <person name="Gerber S.A."/>
            <person name="Gygi S.P."/>
        </authorList>
    </citation>
    <scope>PHOSPHORYLATION [LARGE SCALE ANALYSIS] AT SER-177</scope>
    <scope>IDENTIFICATION BY MASS SPECTROMETRY [LARGE SCALE ANALYSIS]</scope>
    <source>
        <tissue>Liver</tissue>
    </source>
</reference>
<reference key="3">
    <citation type="journal article" date="2010" name="Cell">
        <title>A tissue-specific atlas of mouse protein phosphorylation and expression.</title>
        <authorList>
            <person name="Huttlin E.L."/>
            <person name="Jedrychowski M.P."/>
            <person name="Elias J.E."/>
            <person name="Goswami T."/>
            <person name="Rad R."/>
            <person name="Beausoleil S.A."/>
            <person name="Villen J."/>
            <person name="Haas W."/>
            <person name="Sowa M.E."/>
            <person name="Gygi S.P."/>
        </authorList>
    </citation>
    <scope>PHOSPHORYLATION [LARGE SCALE ANALYSIS] AT SER-177</scope>
    <scope>IDENTIFICATION BY MASS SPECTROMETRY [LARGE SCALE ANALYSIS]</scope>
    <source>
        <tissue>Brain</tissue>
        <tissue>Brown adipose tissue</tissue>
        <tissue>Kidney</tissue>
    </source>
</reference>
<comment type="function">
    <text evidence="1">Regulates mitotic spindle assembly, microtubule (MT)-kinetochore attachment and chromosome separation via recruitment of HAUS augmin-like complex and TUBG1 to the existing MTs and promoting MT-based MT nucleation (By similarity). Required for proper alignnment of chromosomes during metaphase (By similarity).</text>
</comment>
<comment type="subunit">
    <text evidence="1 2">Homotrimer; self-association is mediated by the N-terminal coiled coil (By similarity). Interacts with EML2 but not with EML1 (By similarity). Interacts (phosphorylated at Thr-882) with TUBG1, HAUS1, HAUS2, HAUS3, HAUS4, HAUS5, HAUS6, HAUS7 and HAUS8.</text>
</comment>
<comment type="subcellular location">
    <subcellularLocation>
        <location evidence="5">Cytoplasm</location>
        <location evidence="5">Cytoskeleton</location>
    </subcellularLocation>
    <subcellularLocation>
        <location evidence="1">Cytoplasm</location>
    </subcellularLocation>
    <subcellularLocation>
        <location evidence="1">Nucleus</location>
    </subcellularLocation>
    <subcellularLocation>
        <location evidence="1">Midbody</location>
    </subcellularLocation>
    <subcellularLocation>
        <location evidence="1">Cytoplasm</location>
        <location evidence="1">Cytoskeleton</location>
        <location evidence="1">Spindle</location>
    </subcellularLocation>
    <text evidence="1">Localizes to microtubules throughout all mitotic stages and localizes to the midbody during cytokinesis.</text>
</comment>
<comment type="PTM">
    <text evidence="1">Phosphorylation at Thr-882 during mitosis is required for interaction with TUBG1, HAUS1, HAUS2, HAUS3, HAUS4, HAUS5, HAUS6, HAUS7 and HAUS8 and their recruitment to spindle microtubules.</text>
</comment>
<comment type="similarity">
    <text evidence="5">Belongs to the WD repeat EMAP family.</text>
</comment>
<keyword id="KW-0007">Acetylation</keyword>
<keyword id="KW-0131">Cell cycle</keyword>
<keyword id="KW-0132">Cell division</keyword>
<keyword id="KW-0175">Coiled coil</keyword>
<keyword id="KW-0963">Cytoplasm</keyword>
<keyword id="KW-0206">Cytoskeleton</keyword>
<keyword id="KW-0493">Microtubule</keyword>
<keyword id="KW-0498">Mitosis</keyword>
<keyword id="KW-0539">Nucleus</keyword>
<keyword id="KW-0597">Phosphoprotein</keyword>
<keyword id="KW-1185">Reference proteome</keyword>
<keyword id="KW-0677">Repeat</keyword>
<keyword id="KW-0853">WD repeat</keyword>
<name>EMAL3_MOUSE</name>
<evidence type="ECO:0000250" key="1">
    <source>
        <dbReference type="UniProtKB" id="Q32P44"/>
    </source>
</evidence>
<evidence type="ECO:0000250" key="2">
    <source>
        <dbReference type="UniProtKB" id="Q9HC35"/>
    </source>
</evidence>
<evidence type="ECO:0000255" key="3"/>
<evidence type="ECO:0000256" key="4">
    <source>
        <dbReference type="SAM" id="MobiDB-lite"/>
    </source>
</evidence>
<evidence type="ECO:0000305" key="5"/>
<evidence type="ECO:0007744" key="6">
    <source>
    </source>
</evidence>
<evidence type="ECO:0007744" key="7">
    <source>
    </source>
</evidence>
<feature type="chain" id="PRO_0000284391" description="Echinoderm microtubule-associated protein-like 3">
    <location>
        <begin position="1"/>
        <end position="897"/>
    </location>
</feature>
<feature type="repeat" description="WD 1">
    <location>
        <begin position="235"/>
        <end position="287"/>
    </location>
</feature>
<feature type="repeat" description="WD 2">
    <location>
        <begin position="296"/>
        <end position="345"/>
    </location>
</feature>
<feature type="repeat" description="WD 3">
    <location>
        <begin position="351"/>
        <end position="393"/>
    </location>
</feature>
<feature type="repeat" description="WD 4">
    <location>
        <begin position="399"/>
        <end position="435"/>
    </location>
</feature>
<feature type="repeat" description="WD 5">
    <location>
        <begin position="449"/>
        <end position="488"/>
    </location>
</feature>
<feature type="repeat" description="WD 6">
    <location>
        <begin position="505"/>
        <end position="544"/>
    </location>
</feature>
<feature type="repeat" description="WD 7">
    <location>
        <begin position="550"/>
        <end position="585"/>
    </location>
</feature>
<feature type="repeat" description="WD 8">
    <location>
        <begin position="590"/>
        <end position="627"/>
    </location>
</feature>
<feature type="repeat" description="WD 9">
    <location>
        <begin position="630"/>
        <end position="668"/>
    </location>
</feature>
<feature type="repeat" description="WD 10">
    <location>
        <begin position="675"/>
        <end position="710"/>
    </location>
</feature>
<feature type="repeat" description="WD 11">
    <location>
        <begin position="717"/>
        <end position="756"/>
    </location>
</feature>
<feature type="repeat" description="WD 12">
    <location>
        <begin position="766"/>
        <end position="824"/>
    </location>
</feature>
<feature type="repeat" description="WD 13">
    <location>
        <begin position="831"/>
        <end position="870"/>
    </location>
</feature>
<feature type="region of interest" description="Disordered" evidence="4">
    <location>
        <begin position="51"/>
        <end position="210"/>
    </location>
</feature>
<feature type="region of interest" description="Disordered" evidence="4">
    <location>
        <begin position="876"/>
        <end position="897"/>
    </location>
</feature>
<feature type="coiled-coil region" evidence="3">
    <location>
        <begin position="16"/>
        <end position="43"/>
    </location>
</feature>
<feature type="compositionally biased region" description="Polar residues" evidence="4">
    <location>
        <begin position="51"/>
        <end position="68"/>
    </location>
</feature>
<feature type="compositionally biased region" description="Low complexity" evidence="4">
    <location>
        <begin position="96"/>
        <end position="108"/>
    </location>
</feature>
<feature type="compositionally biased region" description="Low complexity" evidence="4">
    <location>
        <begin position="118"/>
        <end position="132"/>
    </location>
</feature>
<feature type="compositionally biased region" description="Low complexity" evidence="4">
    <location>
        <begin position="155"/>
        <end position="164"/>
    </location>
</feature>
<feature type="compositionally biased region" description="Polar residues" evidence="4">
    <location>
        <begin position="175"/>
        <end position="190"/>
    </location>
</feature>
<feature type="compositionally biased region" description="Polar residues" evidence="4">
    <location>
        <begin position="883"/>
        <end position="897"/>
    </location>
</feature>
<feature type="modified residue" description="N-acetylmethionine" evidence="1">
    <location>
        <position position="1"/>
    </location>
</feature>
<feature type="modified residue" description="Phosphoserine" evidence="6 7">
    <location>
        <position position="177"/>
    </location>
</feature>
<feature type="modified residue" description="Phosphoserine" evidence="1">
    <location>
        <position position="199"/>
    </location>
</feature>
<feature type="modified residue" description="Phosphoserine" evidence="1">
    <location>
        <position position="205"/>
    </location>
</feature>
<feature type="modified residue" description="Phosphothreonine; by CDK1" evidence="1">
    <location>
        <position position="882"/>
    </location>
</feature>
<feature type="modified residue" description="Phosphoserine" evidence="1">
    <location>
        <position position="884"/>
    </location>
</feature>
<proteinExistence type="evidence at protein level"/>
<accession>Q8VC03</accession>
<accession>Q8R1S1</accession>
<organism>
    <name type="scientific">Mus musculus</name>
    <name type="common">Mouse</name>
    <dbReference type="NCBI Taxonomy" id="10090"/>
    <lineage>
        <taxon>Eukaryota</taxon>
        <taxon>Metazoa</taxon>
        <taxon>Chordata</taxon>
        <taxon>Craniata</taxon>
        <taxon>Vertebrata</taxon>
        <taxon>Euteleostomi</taxon>
        <taxon>Mammalia</taxon>
        <taxon>Eutheria</taxon>
        <taxon>Euarchontoglires</taxon>
        <taxon>Glires</taxon>
        <taxon>Rodentia</taxon>
        <taxon>Myomorpha</taxon>
        <taxon>Muroidea</taxon>
        <taxon>Muridae</taxon>
        <taxon>Murinae</taxon>
        <taxon>Mus</taxon>
        <taxon>Mus</taxon>
    </lineage>
</organism>
<protein>
    <recommendedName>
        <fullName>Echinoderm microtubule-associated protein-like 3</fullName>
        <shortName>EMAP-3</shortName>
    </recommendedName>
</protein>
<dbReference type="EMBL" id="BC022146">
    <property type="protein sequence ID" value="AAH22146.1"/>
    <property type="molecule type" value="mRNA"/>
</dbReference>
<dbReference type="EMBL" id="BC023878">
    <property type="protein sequence ID" value="AAH23878.1"/>
    <property type="molecule type" value="mRNA"/>
</dbReference>
<dbReference type="EMBL" id="BC024134">
    <property type="protein sequence ID" value="AAH24134.1"/>
    <property type="molecule type" value="mRNA"/>
</dbReference>
<dbReference type="CCDS" id="CCDS29560.1"/>
<dbReference type="RefSeq" id="NP_659121.1">
    <property type="nucleotide sequence ID" value="NM_144872.1"/>
</dbReference>
<dbReference type="RefSeq" id="XP_036017433.1">
    <property type="nucleotide sequence ID" value="XM_036161540.1"/>
</dbReference>
<dbReference type="SMR" id="Q8VC03"/>
<dbReference type="BioGRID" id="230444">
    <property type="interactions" value="10"/>
</dbReference>
<dbReference type="FunCoup" id="Q8VC03">
    <property type="interactions" value="1126"/>
</dbReference>
<dbReference type="STRING" id="10090.ENSMUSP00000093960"/>
<dbReference type="GlyGen" id="Q8VC03">
    <property type="glycosylation" value="2 sites, 1 N-linked glycan (1 site)"/>
</dbReference>
<dbReference type="iPTMnet" id="Q8VC03"/>
<dbReference type="PhosphoSitePlus" id="Q8VC03"/>
<dbReference type="jPOST" id="Q8VC03"/>
<dbReference type="PaxDb" id="10090-ENSMUSP00000093960"/>
<dbReference type="PeptideAtlas" id="Q8VC03"/>
<dbReference type="ProteomicsDB" id="277826"/>
<dbReference type="Antibodypedia" id="28533">
    <property type="antibodies" value="50 antibodies from 14 providers"/>
</dbReference>
<dbReference type="DNASU" id="225898"/>
<dbReference type="Ensembl" id="ENSMUST00000096241.6">
    <property type="protein sequence ID" value="ENSMUSP00000093960.5"/>
    <property type="gene ID" value="ENSMUSG00000071647.6"/>
</dbReference>
<dbReference type="GeneID" id="225898"/>
<dbReference type="KEGG" id="mmu:225898"/>
<dbReference type="UCSC" id="uc008god.1">
    <property type="organism name" value="mouse"/>
</dbReference>
<dbReference type="AGR" id="MGI:2387612"/>
<dbReference type="CTD" id="256364"/>
<dbReference type="MGI" id="MGI:2387612">
    <property type="gene designation" value="Eml3"/>
</dbReference>
<dbReference type="VEuPathDB" id="HostDB:ENSMUSG00000071647"/>
<dbReference type="eggNOG" id="KOG2106">
    <property type="taxonomic scope" value="Eukaryota"/>
</dbReference>
<dbReference type="GeneTree" id="ENSGT00940000159589"/>
<dbReference type="HOGENOM" id="CLU_011754_0_1_1"/>
<dbReference type="InParanoid" id="Q8VC03"/>
<dbReference type="OMA" id="PNGREVC"/>
<dbReference type="OrthoDB" id="47802at2759"/>
<dbReference type="PhylomeDB" id="Q8VC03"/>
<dbReference type="TreeFam" id="TF317832"/>
<dbReference type="BioGRID-ORCS" id="225898">
    <property type="hits" value="2 hits in 76 CRISPR screens"/>
</dbReference>
<dbReference type="ChiTaRS" id="Eml3">
    <property type="organism name" value="mouse"/>
</dbReference>
<dbReference type="PRO" id="PR:Q8VC03"/>
<dbReference type="Proteomes" id="UP000000589">
    <property type="component" value="Chromosome 19"/>
</dbReference>
<dbReference type="RNAct" id="Q8VC03">
    <property type="molecule type" value="protein"/>
</dbReference>
<dbReference type="Bgee" id="ENSMUSG00000071647">
    <property type="expression patterns" value="Expressed in retinal neural layer and 216 other cell types or tissues"/>
</dbReference>
<dbReference type="ExpressionAtlas" id="Q8VC03">
    <property type="expression patterns" value="baseline and differential"/>
</dbReference>
<dbReference type="GO" id="GO:0005737">
    <property type="term" value="C:cytoplasm"/>
    <property type="evidence" value="ECO:0000250"/>
    <property type="project" value="UniProtKB"/>
</dbReference>
<dbReference type="GO" id="GO:0015630">
    <property type="term" value="C:microtubule cytoskeleton"/>
    <property type="evidence" value="ECO:0000250"/>
    <property type="project" value="UniProtKB"/>
</dbReference>
<dbReference type="GO" id="GO:0030496">
    <property type="term" value="C:midbody"/>
    <property type="evidence" value="ECO:0000250"/>
    <property type="project" value="UniProtKB"/>
</dbReference>
<dbReference type="GO" id="GO:1990498">
    <property type="term" value="C:mitotic spindle microtubule"/>
    <property type="evidence" value="ECO:0000250"/>
    <property type="project" value="UniProtKB"/>
</dbReference>
<dbReference type="GO" id="GO:0005634">
    <property type="term" value="C:nucleus"/>
    <property type="evidence" value="ECO:0007669"/>
    <property type="project" value="UniProtKB-SubCell"/>
</dbReference>
<dbReference type="GO" id="GO:0005819">
    <property type="term" value="C:spindle"/>
    <property type="evidence" value="ECO:0000250"/>
    <property type="project" value="UniProtKB"/>
</dbReference>
<dbReference type="GO" id="GO:0005876">
    <property type="term" value="C:spindle microtubule"/>
    <property type="evidence" value="ECO:0000250"/>
    <property type="project" value="UniProtKB"/>
</dbReference>
<dbReference type="GO" id="GO:0051301">
    <property type="term" value="P:cell division"/>
    <property type="evidence" value="ECO:0007669"/>
    <property type="project" value="UniProtKB-KW"/>
</dbReference>
<dbReference type="GO" id="GO:0007080">
    <property type="term" value="P:mitotic metaphase chromosome alignment"/>
    <property type="evidence" value="ECO:0000250"/>
    <property type="project" value="UniProtKB"/>
</dbReference>
<dbReference type="GO" id="GO:1901673">
    <property type="term" value="P:regulation of mitotic spindle assembly"/>
    <property type="evidence" value="ECO:0000250"/>
    <property type="project" value="UniProtKB"/>
</dbReference>
<dbReference type="CDD" id="cd21949">
    <property type="entry name" value="TD_EMAP3"/>
    <property type="match status" value="1"/>
</dbReference>
<dbReference type="FunFam" id="2.130.10.10:FF:000019">
    <property type="entry name" value="echinoderm microtubule-associated protein-like 4 isoform X2"/>
    <property type="match status" value="1"/>
</dbReference>
<dbReference type="FunFam" id="2.130.10.10:FF:000005">
    <property type="entry name" value="Putative echinoderm microtubule-associated protein-like 1"/>
    <property type="match status" value="1"/>
</dbReference>
<dbReference type="Gene3D" id="2.130.10.10">
    <property type="entry name" value="YVTN repeat-like/Quinoprotein amine dehydrogenase"/>
    <property type="match status" value="2"/>
</dbReference>
<dbReference type="InterPro" id="IPR055442">
    <property type="entry name" value="Beta-prop_EML-like_2nd"/>
</dbReference>
<dbReference type="InterPro" id="IPR055439">
    <property type="entry name" value="Beta-prop_EML_1st"/>
</dbReference>
<dbReference type="InterPro" id="IPR005108">
    <property type="entry name" value="HELP"/>
</dbReference>
<dbReference type="InterPro" id="IPR011047">
    <property type="entry name" value="Quinoprotein_ADH-like_sf"/>
</dbReference>
<dbReference type="InterPro" id="IPR015943">
    <property type="entry name" value="WD40/YVTN_repeat-like_dom_sf"/>
</dbReference>
<dbReference type="InterPro" id="IPR036322">
    <property type="entry name" value="WD40_repeat_dom_sf"/>
</dbReference>
<dbReference type="InterPro" id="IPR001680">
    <property type="entry name" value="WD40_rpt"/>
</dbReference>
<dbReference type="InterPro" id="IPR050630">
    <property type="entry name" value="WD_repeat_EMAP"/>
</dbReference>
<dbReference type="PANTHER" id="PTHR13720:SF15">
    <property type="entry name" value="ECHINODERM MICROTUBULE-ASSOCIATED PROTEIN-LIKE 3"/>
    <property type="match status" value="1"/>
</dbReference>
<dbReference type="PANTHER" id="PTHR13720">
    <property type="entry name" value="WD-40 REPEAT PROTEIN"/>
    <property type="match status" value="1"/>
</dbReference>
<dbReference type="Pfam" id="PF23409">
    <property type="entry name" value="Beta-prop_EML"/>
    <property type="match status" value="1"/>
</dbReference>
<dbReference type="Pfam" id="PF23414">
    <property type="entry name" value="Beta-prop_EML_2"/>
    <property type="match status" value="1"/>
</dbReference>
<dbReference type="Pfam" id="PF03451">
    <property type="entry name" value="HELP"/>
    <property type="match status" value="1"/>
</dbReference>
<dbReference type="SMART" id="SM00320">
    <property type="entry name" value="WD40"/>
    <property type="match status" value="8"/>
</dbReference>
<dbReference type="SUPFAM" id="SSF50998">
    <property type="entry name" value="Quinoprotein alcohol dehydrogenase-like"/>
    <property type="match status" value="1"/>
</dbReference>
<dbReference type="SUPFAM" id="SSF50978">
    <property type="entry name" value="WD40 repeat-like"/>
    <property type="match status" value="1"/>
</dbReference>
<dbReference type="PROSITE" id="PS50082">
    <property type="entry name" value="WD_REPEATS_2"/>
    <property type="match status" value="3"/>
</dbReference>
<dbReference type="PROSITE" id="PS50294">
    <property type="entry name" value="WD_REPEATS_REGION"/>
    <property type="match status" value="1"/>
</dbReference>
<gene>
    <name type="primary">Eml3</name>
</gene>